<dbReference type="EMBL" id="AE004092">
    <property type="protein sequence ID" value="AAK34757.1"/>
    <property type="molecule type" value="Genomic_DNA"/>
</dbReference>
<dbReference type="EMBL" id="CP000017">
    <property type="protein sequence ID" value="AAZ52413.1"/>
    <property type="molecule type" value="Genomic_DNA"/>
</dbReference>
<dbReference type="RefSeq" id="NP_270036.1">
    <property type="nucleotide sequence ID" value="NC_002737.2"/>
</dbReference>
<dbReference type="PaxDb" id="1314-HKU360_01909"/>
<dbReference type="KEGG" id="spy:SPy_2112"/>
<dbReference type="KEGG" id="spz:M5005_Spy1795"/>
<dbReference type="PATRIC" id="fig|160490.10.peg.1829"/>
<dbReference type="HOGENOM" id="CLU_146610_2_1_9"/>
<dbReference type="OMA" id="HSDDYDK"/>
<dbReference type="Proteomes" id="UP000000750">
    <property type="component" value="Chromosome"/>
</dbReference>
<dbReference type="HAMAP" id="MF_01448">
    <property type="entry name" value="UPF0473"/>
    <property type="match status" value="1"/>
</dbReference>
<dbReference type="InterPro" id="IPR009711">
    <property type="entry name" value="UPF0473"/>
</dbReference>
<dbReference type="NCBIfam" id="NF010215">
    <property type="entry name" value="PRK13678.1-2"/>
    <property type="match status" value="1"/>
</dbReference>
<dbReference type="NCBIfam" id="NF010217">
    <property type="entry name" value="PRK13678.1-4"/>
    <property type="match status" value="1"/>
</dbReference>
<dbReference type="PANTHER" id="PTHR40066">
    <property type="entry name" value="UPF0473 PROTEIN CBO2561/CLC_2432"/>
    <property type="match status" value="1"/>
</dbReference>
<dbReference type="PANTHER" id="PTHR40066:SF1">
    <property type="entry name" value="UPF0473 PROTEIN CBO2561_CLC_2432"/>
    <property type="match status" value="1"/>
</dbReference>
<dbReference type="Pfam" id="PF06949">
    <property type="entry name" value="DUF1292"/>
    <property type="match status" value="1"/>
</dbReference>
<sequence>MTHNHENDHQHEVITLVDEQGNETLFEILLTIDGREEFGKNYVLLVPAGSEEDESGEIEIQAYSFTENEDGTEGDLQPIPEDSDAEWDMIEEVFNSFLDEN</sequence>
<protein>
    <recommendedName>
        <fullName evidence="1">UPF0473 protein SPy_2112/M5005_Spy1795</fullName>
    </recommendedName>
</protein>
<proteinExistence type="inferred from homology"/>
<feature type="chain" id="PRO_0000304860" description="UPF0473 protein SPy_2112/M5005_Spy1795">
    <location>
        <begin position="1"/>
        <end position="101"/>
    </location>
</feature>
<accession>Q99XP5</accession>
<accession>Q48W62</accession>
<organism>
    <name type="scientific">Streptococcus pyogenes serotype M1</name>
    <dbReference type="NCBI Taxonomy" id="301447"/>
    <lineage>
        <taxon>Bacteria</taxon>
        <taxon>Bacillati</taxon>
        <taxon>Bacillota</taxon>
        <taxon>Bacilli</taxon>
        <taxon>Lactobacillales</taxon>
        <taxon>Streptococcaceae</taxon>
        <taxon>Streptococcus</taxon>
    </lineage>
</organism>
<keyword id="KW-1185">Reference proteome</keyword>
<gene>
    <name type="ordered locus">SPy_2112</name>
    <name type="ordered locus">M5005_Spy1795</name>
</gene>
<evidence type="ECO:0000255" key="1">
    <source>
        <dbReference type="HAMAP-Rule" id="MF_01448"/>
    </source>
</evidence>
<name>Y2112_STRP1</name>
<comment type="similarity">
    <text evidence="1">Belongs to the UPF0473 family.</text>
</comment>
<reference key="1">
    <citation type="journal article" date="2001" name="Proc. Natl. Acad. Sci. U.S.A.">
        <title>Complete genome sequence of an M1 strain of Streptococcus pyogenes.</title>
        <authorList>
            <person name="Ferretti J.J."/>
            <person name="McShan W.M."/>
            <person name="Ajdic D.J."/>
            <person name="Savic D.J."/>
            <person name="Savic G."/>
            <person name="Lyon K."/>
            <person name="Primeaux C."/>
            <person name="Sezate S."/>
            <person name="Suvorov A.N."/>
            <person name="Kenton S."/>
            <person name="Lai H.S."/>
            <person name="Lin S.P."/>
            <person name="Qian Y."/>
            <person name="Jia H.G."/>
            <person name="Najar F.Z."/>
            <person name="Ren Q."/>
            <person name="Zhu H."/>
            <person name="Song L."/>
            <person name="White J."/>
            <person name="Yuan X."/>
            <person name="Clifton S.W."/>
            <person name="Roe B.A."/>
            <person name="McLaughlin R.E."/>
        </authorList>
    </citation>
    <scope>NUCLEOTIDE SEQUENCE [LARGE SCALE GENOMIC DNA]</scope>
    <source>
        <strain>ATCC 700294 / SF370 / Serotype M1</strain>
    </source>
</reference>
<reference key="2">
    <citation type="journal article" date="2005" name="J. Infect. Dis.">
        <title>Evolutionary origin and emergence of a highly successful clone of serotype M1 group A Streptococcus involved multiple horizontal gene transfer events.</title>
        <authorList>
            <person name="Sumby P."/>
            <person name="Porcella S.F."/>
            <person name="Madrigal A.G."/>
            <person name="Barbian K.D."/>
            <person name="Virtaneva K."/>
            <person name="Ricklefs S.M."/>
            <person name="Sturdevant D.E."/>
            <person name="Graham M.R."/>
            <person name="Vuopio-Varkila J."/>
            <person name="Hoe N.P."/>
            <person name="Musser J.M."/>
        </authorList>
    </citation>
    <scope>NUCLEOTIDE SEQUENCE [LARGE SCALE GENOMIC DNA]</scope>
    <source>
        <strain>ATCC BAA-947 / MGAS5005 / Serotype M1</strain>
    </source>
</reference>